<reference key="1">
    <citation type="journal article" date="1999" name="Immunogenetics">
        <title>Organization of the genes encoding the human proteasome activators PA28alpha and beta.</title>
        <authorList>
            <person name="McCusker D."/>
            <person name="Wilson M."/>
            <person name="Trowsdale J."/>
        </authorList>
    </citation>
    <scope>NUCLEOTIDE SEQUENCE [GENOMIC DNA]</scope>
    <scope>VARIANT PRO-89</scope>
</reference>
<reference key="2">
    <citation type="journal article" date="1995" name="FEBS Lett.">
        <title>Primary structures of two homologous subunits of PA28, a gamma-interferon-inducible protein activator of the 20S proteasome.</title>
        <authorList>
            <person name="Ahn J.Y."/>
            <person name="Tanahashi N."/>
            <person name="Akiyama K."/>
            <person name="Hisamatsu H."/>
            <person name="Noda C."/>
            <person name="Tanaka K."/>
            <person name="Chung C.H."/>
            <person name="Shibmara N."/>
            <person name="Willy P.J."/>
            <person name="Mott J.D."/>
            <person name="Slaughter C.A."/>
            <person name="DeMartino G.N."/>
        </authorList>
    </citation>
    <scope>NUCLEOTIDE SEQUENCE [MRNA]</scope>
    <scope>VARIANT PRO-89</scope>
</reference>
<reference key="3">
    <citation type="journal article" date="2003" name="Nature">
        <title>The DNA sequence and analysis of human chromosome 14.</title>
        <authorList>
            <person name="Heilig R."/>
            <person name="Eckenberg R."/>
            <person name="Petit J.-L."/>
            <person name="Fonknechten N."/>
            <person name="Da Silva C."/>
            <person name="Cattolico L."/>
            <person name="Levy M."/>
            <person name="Barbe V."/>
            <person name="De Berardinis V."/>
            <person name="Ureta-Vidal A."/>
            <person name="Pelletier E."/>
            <person name="Vico V."/>
            <person name="Anthouard V."/>
            <person name="Rowen L."/>
            <person name="Madan A."/>
            <person name="Qin S."/>
            <person name="Sun H."/>
            <person name="Du H."/>
            <person name="Pepin K."/>
            <person name="Artiguenave F."/>
            <person name="Robert C."/>
            <person name="Cruaud C."/>
            <person name="Bruels T."/>
            <person name="Jaillon O."/>
            <person name="Friedlander L."/>
            <person name="Samson G."/>
            <person name="Brottier P."/>
            <person name="Cure S."/>
            <person name="Segurens B."/>
            <person name="Aniere F."/>
            <person name="Samain S."/>
            <person name="Crespeau H."/>
            <person name="Abbasi N."/>
            <person name="Aiach N."/>
            <person name="Boscus D."/>
            <person name="Dickhoff R."/>
            <person name="Dors M."/>
            <person name="Dubois I."/>
            <person name="Friedman C."/>
            <person name="Gouyvenoux M."/>
            <person name="James R."/>
            <person name="Madan A."/>
            <person name="Mairey-Estrada B."/>
            <person name="Mangenot S."/>
            <person name="Martins N."/>
            <person name="Menard M."/>
            <person name="Oztas S."/>
            <person name="Ratcliffe A."/>
            <person name="Shaffer T."/>
            <person name="Trask B."/>
            <person name="Vacherie B."/>
            <person name="Bellemere C."/>
            <person name="Belser C."/>
            <person name="Besnard-Gonnet M."/>
            <person name="Bartol-Mavel D."/>
            <person name="Boutard M."/>
            <person name="Briez-Silla S."/>
            <person name="Combette S."/>
            <person name="Dufosse-Laurent V."/>
            <person name="Ferron C."/>
            <person name="Lechaplais C."/>
            <person name="Louesse C."/>
            <person name="Muselet D."/>
            <person name="Magdelenat G."/>
            <person name="Pateau E."/>
            <person name="Petit E."/>
            <person name="Sirvain-Trukniewicz P."/>
            <person name="Trybou A."/>
            <person name="Vega-Czarny N."/>
            <person name="Bataille E."/>
            <person name="Bluet E."/>
            <person name="Bordelais I."/>
            <person name="Dubois M."/>
            <person name="Dumont C."/>
            <person name="Guerin T."/>
            <person name="Haffray S."/>
            <person name="Hammadi R."/>
            <person name="Muanga J."/>
            <person name="Pellouin V."/>
            <person name="Robert D."/>
            <person name="Wunderle E."/>
            <person name="Gauguet G."/>
            <person name="Roy A."/>
            <person name="Sainte-Marthe L."/>
            <person name="Verdier J."/>
            <person name="Verdier-Discala C."/>
            <person name="Hillier L.W."/>
            <person name="Fulton L."/>
            <person name="McPherson J."/>
            <person name="Matsuda F."/>
            <person name="Wilson R."/>
            <person name="Scarpelli C."/>
            <person name="Gyapay G."/>
            <person name="Wincker P."/>
            <person name="Saurin W."/>
            <person name="Quetier F."/>
            <person name="Waterston R."/>
            <person name="Hood L."/>
            <person name="Weissenbach J."/>
        </authorList>
    </citation>
    <scope>NUCLEOTIDE SEQUENCE [LARGE SCALE GENOMIC DNA]</scope>
</reference>
<reference key="4">
    <citation type="journal article" date="2004" name="Genome Res.">
        <title>The status, quality, and expansion of the NIH full-length cDNA project: the Mammalian Gene Collection (MGC).</title>
        <authorList>
            <consortium name="The MGC Project Team"/>
        </authorList>
    </citation>
    <scope>NUCLEOTIDE SEQUENCE [LARGE SCALE MRNA]</scope>
    <scope>VARIANT PRO-89</scope>
    <source>
        <tissue>Liver</tissue>
        <tissue>Pancreas</tissue>
        <tissue>Placenta</tissue>
    </source>
</reference>
<reference key="5">
    <citation type="submission" date="2004-10" db="UniProtKB">
        <authorList>
            <person name="Bienvenut W.V."/>
        </authorList>
    </citation>
    <scope>PROTEIN SEQUENCE OF 2-61; 91-115; 132-145; 155-171; 181-226 AND 232-239</scope>
    <scope>CLEAVAGE OF INITIATOR METHIONINE</scope>
    <scope>ACETYLATION AT ALA-2</scope>
    <scope>IDENTIFICATION BY MASS SPECTROMETRY</scope>
    <source>
        <tissue>B-cell lymphoma</tissue>
    </source>
</reference>
<reference key="6">
    <citation type="journal article" date="2007" name="Biochemistry">
        <title>Mass spectrometric characterization of the affinity-purified human 26S proteasome complex.</title>
        <authorList>
            <person name="Wang X."/>
            <person name="Chen C.-F."/>
            <person name="Baker P.R."/>
            <person name="Chen P.-L."/>
            <person name="Kaiser P."/>
            <person name="Huang L."/>
        </authorList>
    </citation>
    <scope>IDENTIFICATION BY MASS SPECTROMETRY [LARGE SCALE ANALYSIS]</scope>
    <source>
        <tissue>Embryonic kidney</tissue>
    </source>
</reference>
<reference key="7">
    <citation type="journal article" date="2010" name="Sci. Signal.">
        <title>Quantitative phosphoproteomics reveals widespread full phosphorylation site occupancy during mitosis.</title>
        <authorList>
            <person name="Olsen J.V."/>
            <person name="Vermeulen M."/>
            <person name="Santamaria A."/>
            <person name="Kumar C."/>
            <person name="Miller M.L."/>
            <person name="Jensen L.J."/>
            <person name="Gnad F."/>
            <person name="Cox J."/>
            <person name="Jensen T.S."/>
            <person name="Nigg E.A."/>
            <person name="Brunak S."/>
            <person name="Mann M."/>
        </authorList>
    </citation>
    <scope>PHOSPHORYLATION [LARGE SCALE ANALYSIS] AT SER-10</scope>
    <scope>IDENTIFICATION BY MASS SPECTROMETRY [LARGE SCALE ANALYSIS]</scope>
    <source>
        <tissue>Cervix carcinoma</tissue>
    </source>
</reference>
<reference key="8">
    <citation type="journal article" date="2011" name="BMC Syst. Biol.">
        <title>Initial characterization of the human central proteome.</title>
        <authorList>
            <person name="Burkard T.R."/>
            <person name="Planyavsky M."/>
            <person name="Kaupe I."/>
            <person name="Breitwieser F.P."/>
            <person name="Buerckstuemmer T."/>
            <person name="Bennett K.L."/>
            <person name="Superti-Furga G."/>
            <person name="Colinge J."/>
        </authorList>
    </citation>
    <scope>IDENTIFICATION BY MASS SPECTROMETRY [LARGE SCALE ANALYSIS]</scope>
</reference>
<reference key="9">
    <citation type="journal article" date="2012" name="Proc. Natl. Acad. Sci. U.S.A.">
        <title>N-terminal acetylome analyses and functional insights of the N-terminal acetyltransferase NatB.</title>
        <authorList>
            <person name="Van Damme P."/>
            <person name="Lasa M."/>
            <person name="Polevoda B."/>
            <person name="Gazquez C."/>
            <person name="Elosegui-Artola A."/>
            <person name="Kim D.S."/>
            <person name="De Juan-Pardo E."/>
            <person name="Demeyer K."/>
            <person name="Hole K."/>
            <person name="Larrea E."/>
            <person name="Timmerman E."/>
            <person name="Prieto J."/>
            <person name="Arnesen T."/>
            <person name="Sherman F."/>
            <person name="Gevaert K."/>
            <person name="Aldabe R."/>
        </authorList>
    </citation>
    <scope>ACETYLATION [LARGE SCALE ANALYSIS] AT ALA-2</scope>
    <scope>CLEAVAGE OF INITIATOR METHIONINE [LARGE SCALE ANALYSIS]</scope>
    <scope>IDENTIFICATION BY MASS SPECTROMETRY [LARGE SCALE ANALYSIS]</scope>
</reference>
<reference key="10">
    <citation type="journal article" date="2013" name="J. Proteome Res.">
        <title>Toward a comprehensive characterization of a human cancer cell phosphoproteome.</title>
        <authorList>
            <person name="Zhou H."/>
            <person name="Di Palma S."/>
            <person name="Preisinger C."/>
            <person name="Peng M."/>
            <person name="Polat A.N."/>
            <person name="Heck A.J."/>
            <person name="Mohammed S."/>
        </authorList>
    </citation>
    <scope>PHOSPHORYLATION [LARGE SCALE ANALYSIS] AT SER-10</scope>
    <scope>IDENTIFICATION BY MASS SPECTROMETRY [LARGE SCALE ANALYSIS]</scope>
    <source>
        <tissue>Cervix carcinoma</tissue>
        <tissue>Erythroleukemia</tissue>
    </source>
</reference>
<reference key="11">
    <citation type="journal article" date="2014" name="J. Proteomics">
        <title>An enzyme assisted RP-RPLC approach for in-depth analysis of human liver phosphoproteome.</title>
        <authorList>
            <person name="Bian Y."/>
            <person name="Song C."/>
            <person name="Cheng K."/>
            <person name="Dong M."/>
            <person name="Wang F."/>
            <person name="Huang J."/>
            <person name="Sun D."/>
            <person name="Wang L."/>
            <person name="Ye M."/>
            <person name="Zou H."/>
        </authorList>
    </citation>
    <scope>IDENTIFICATION BY MASS SPECTROMETRY [LARGE SCALE ANALYSIS]</scope>
    <source>
        <tissue>Liver</tissue>
    </source>
</reference>
<reference key="12">
    <citation type="journal article" date="2015" name="Proteomics">
        <title>N-terminome analysis of the human mitochondrial proteome.</title>
        <authorList>
            <person name="Vaca Jacome A.S."/>
            <person name="Rabilloud T."/>
            <person name="Schaeffer-Reiss C."/>
            <person name="Rompais M."/>
            <person name="Ayoub D."/>
            <person name="Lane L."/>
            <person name="Bairoch A."/>
            <person name="Van Dorsselaer A."/>
            <person name="Carapito C."/>
        </authorList>
    </citation>
    <scope>IDENTIFICATION BY MASS SPECTROMETRY [LARGE SCALE ANALYSIS]</scope>
</reference>
<proteinExistence type="evidence at protein level"/>
<protein>
    <recommendedName>
        <fullName>Proteasome activator complex subunit 2</fullName>
    </recommendedName>
    <alternativeName>
        <fullName>11S regulator complex subunit beta</fullName>
        <shortName>REG-beta</shortName>
    </alternativeName>
    <alternativeName>
        <fullName>Activator of multicatalytic protease subunit 2</fullName>
    </alternativeName>
    <alternativeName>
        <fullName>Proteasome activator 28 subunit beta</fullName>
        <shortName>PA28b</shortName>
        <shortName>PA28beta</shortName>
    </alternativeName>
</protein>
<name>PSME2_HUMAN</name>
<accession>Q9UL46</accession>
<accession>Q15129</accession>
<organism>
    <name type="scientific">Homo sapiens</name>
    <name type="common">Human</name>
    <dbReference type="NCBI Taxonomy" id="9606"/>
    <lineage>
        <taxon>Eukaryota</taxon>
        <taxon>Metazoa</taxon>
        <taxon>Chordata</taxon>
        <taxon>Craniata</taxon>
        <taxon>Vertebrata</taxon>
        <taxon>Euteleostomi</taxon>
        <taxon>Mammalia</taxon>
        <taxon>Eutheria</taxon>
        <taxon>Euarchontoglires</taxon>
        <taxon>Primates</taxon>
        <taxon>Haplorrhini</taxon>
        <taxon>Catarrhini</taxon>
        <taxon>Hominidae</taxon>
        <taxon>Homo</taxon>
    </lineage>
</organism>
<comment type="function">
    <text>Implicated in immunoproteasome assembly and required for efficient antigen processing. The PA28 activator complex enhances the generation of class I binding peptides by altering the cleavage pattern of the proteasome.</text>
</comment>
<comment type="subunit">
    <text>Heterodimer of PSME1 and PSME2, which forms a hexameric ring.</text>
</comment>
<comment type="interaction">
    <interactant intactId="EBI-741630">
        <id>Q9UL46</id>
    </interactant>
    <interactant intactId="EBI-724940">
        <id>Q9BVJ7</id>
        <label>DUSP23</label>
    </interactant>
    <organismsDiffer>false</organismsDiffer>
    <experiments>3</experiments>
</comment>
<comment type="interaction">
    <interactant intactId="EBI-741630">
        <id>Q9UL46</id>
    </interactant>
    <interactant intactId="EBI-739832">
        <id>Q8TBB1</id>
        <label>LNX1</label>
    </interactant>
    <organismsDiffer>false</organismsDiffer>
    <experiments>3</experiments>
</comment>
<comment type="interaction">
    <interactant intactId="EBI-741630">
        <id>Q9UL46</id>
    </interactant>
    <interactant intactId="EBI-712149">
        <id>Q06323</id>
        <label>PSME1</label>
    </interactant>
    <organismsDiffer>false</organismsDiffer>
    <experiments>10</experiments>
</comment>
<comment type="interaction">
    <interactant intactId="EBI-741630">
        <id>Q9UL46</id>
    </interactant>
    <interactant intactId="EBI-741630">
        <id>Q9UL46</id>
        <label>PSME2</label>
    </interactant>
    <organismsDiffer>false</organismsDiffer>
    <experiments>6</experiments>
</comment>
<comment type="interaction">
    <interactant intactId="EBI-741630">
        <id>Q9UL46</id>
    </interactant>
    <interactant intactId="EBI-727004">
        <id>O00560</id>
        <label>SDCBP</label>
    </interactant>
    <organismsDiffer>false</organismsDiffer>
    <experiments>5</experiments>
</comment>
<comment type="interaction">
    <interactant intactId="EBI-741630">
        <id>Q9UL46</id>
    </interactant>
    <interactant intactId="EBI-607755">
        <id>Q9BZL1</id>
        <label>UBL5</label>
    </interactant>
    <organismsDiffer>false</organismsDiffer>
    <experiments>3</experiments>
</comment>
<comment type="induction">
    <text>By IFNG/IFN-gamma.</text>
</comment>
<comment type="similarity">
    <text evidence="5">Belongs to the PA28 family.</text>
</comment>
<gene>
    <name type="primary">PSME2</name>
</gene>
<sequence>MAKPCGVRLSGEARKQVEVFRQNLFQEAEEFLYRFLPQKIIYLNQLLQEDSLNVADLTSLRAPLDIPIPDPPPKDDEMETDKQEKKEVHKCGFLPGNEKVLSLLALVKPEVWTLKEKCILVITWIQHLIPKIEDGNDFGVAIQEKVLERVNAVKTKVEAFQTTISKYFSERGDAVAKASKETHVMDYRALVHERDEAAYGELRAMVLDLRAFYAELYHIISSNLEKIVNPKGEEKPSMY</sequence>
<keyword id="KW-0002">3D-structure</keyword>
<keyword id="KW-0007">Acetylation</keyword>
<keyword id="KW-0903">Direct protein sequencing</keyword>
<keyword id="KW-0597">Phosphoprotein</keyword>
<keyword id="KW-0647">Proteasome</keyword>
<keyword id="KW-1267">Proteomics identification</keyword>
<keyword id="KW-1185">Reference proteome</keyword>
<dbReference type="EMBL" id="AF079558">
    <property type="protein sequence ID" value="AAF02218.1"/>
    <property type="molecule type" value="Genomic_DNA"/>
</dbReference>
<dbReference type="EMBL" id="D45248">
    <property type="protein sequence ID" value="BAA08205.1"/>
    <property type="molecule type" value="mRNA"/>
</dbReference>
<dbReference type="EMBL" id="AL136295">
    <property type="status" value="NOT_ANNOTATED_CDS"/>
    <property type="molecule type" value="Genomic_DNA"/>
</dbReference>
<dbReference type="EMBL" id="BC004368">
    <property type="protein sequence ID" value="AAH04368.1"/>
    <property type="molecule type" value="mRNA"/>
</dbReference>
<dbReference type="EMBL" id="BC019885">
    <property type="protein sequence ID" value="AAH19885.1"/>
    <property type="molecule type" value="mRNA"/>
</dbReference>
<dbReference type="EMBL" id="BC072025">
    <property type="protein sequence ID" value="AAH72025.1"/>
    <property type="molecule type" value="mRNA"/>
</dbReference>
<dbReference type="CCDS" id="CCDS9614.1"/>
<dbReference type="PIR" id="I53518">
    <property type="entry name" value="I53518"/>
</dbReference>
<dbReference type="RefSeq" id="NP_002809.2">
    <property type="nucleotide sequence ID" value="NM_002818.2"/>
</dbReference>
<dbReference type="PDB" id="7DR6">
    <property type="method" value="EM"/>
    <property type="resolution" value="4.10 A"/>
    <property type="chains" value="A/D/F=1-239"/>
</dbReference>
<dbReference type="PDB" id="7DRW">
    <property type="method" value="EM"/>
    <property type="resolution" value="4.20 A"/>
    <property type="chains" value="H/K/M/O/c/g=1-239"/>
</dbReference>
<dbReference type="PDB" id="7NAO">
    <property type="method" value="EM"/>
    <property type="resolution" value="2.90 A"/>
    <property type="chains" value="d/f/h/i=1-239"/>
</dbReference>
<dbReference type="PDB" id="7NAP">
    <property type="method" value="EM"/>
    <property type="resolution" value="3.20 A"/>
    <property type="chains" value="d/f/h/i/k/m/o/p=1-239"/>
</dbReference>
<dbReference type="PDB" id="8CXB">
    <property type="method" value="EM"/>
    <property type="resolution" value="2.90 A"/>
    <property type="chains" value="c/e/g=1-239"/>
</dbReference>
<dbReference type="PDBsum" id="7DR6"/>
<dbReference type="PDBsum" id="7DRW"/>
<dbReference type="PDBsum" id="7NAO"/>
<dbReference type="PDBsum" id="7NAP"/>
<dbReference type="PDBsum" id="8CXB"/>
<dbReference type="EMDB" id="EMD-24276"/>
<dbReference type="EMDB" id="EMD-24277"/>
<dbReference type="EMDB" id="EMD-30824"/>
<dbReference type="EMDB" id="EMD-30828"/>
<dbReference type="SMR" id="Q9UL46"/>
<dbReference type="BioGRID" id="111693">
    <property type="interactions" value="140"/>
</dbReference>
<dbReference type="ComplexPortal" id="CPX-8842">
    <property type="entry name" value="PA28-alphabeta double-capped 20S proteasome complex"/>
</dbReference>
<dbReference type="ComplexPortal" id="CPX-9002">
    <property type="entry name" value="PA28-alphabeta single-capped 20S proteasome complex"/>
</dbReference>
<dbReference type="ComplexPortal" id="CPX-9082">
    <property type="entry name" value="19S-20S-PA28-alphabeta hybrid proteasome complex"/>
</dbReference>
<dbReference type="CORUM" id="Q9UL46"/>
<dbReference type="FunCoup" id="Q9UL46">
    <property type="interactions" value="443"/>
</dbReference>
<dbReference type="IntAct" id="Q9UL46">
    <property type="interactions" value="64"/>
</dbReference>
<dbReference type="MINT" id="Q9UL46"/>
<dbReference type="STRING" id="9606.ENSP00000216802"/>
<dbReference type="ChEMBL" id="CHEMBL4295982"/>
<dbReference type="GlyGen" id="Q9UL46">
    <property type="glycosylation" value="1 site, 1 O-linked glycan (1 site)"/>
</dbReference>
<dbReference type="iPTMnet" id="Q9UL46"/>
<dbReference type="MetOSite" id="Q9UL46"/>
<dbReference type="PhosphoSitePlus" id="Q9UL46"/>
<dbReference type="SwissPalm" id="Q9UL46"/>
<dbReference type="BioMuta" id="PSME2"/>
<dbReference type="DMDM" id="296453017"/>
<dbReference type="OGP" id="Q9UL46"/>
<dbReference type="REPRODUCTION-2DPAGE" id="IPI00384051"/>
<dbReference type="CPTAC" id="CPTAC-262"/>
<dbReference type="CPTAC" id="CPTAC-263"/>
<dbReference type="jPOST" id="Q9UL46"/>
<dbReference type="MassIVE" id="Q9UL46"/>
<dbReference type="PaxDb" id="9606-ENSP00000216802"/>
<dbReference type="PeptideAtlas" id="Q9UL46"/>
<dbReference type="ProteomicsDB" id="84947"/>
<dbReference type="Pumba" id="Q9UL46"/>
<dbReference type="TopDownProteomics" id="Q9UL46"/>
<dbReference type="Antibodypedia" id="22660">
    <property type="antibodies" value="383 antibodies from 35 providers"/>
</dbReference>
<dbReference type="DNASU" id="5721"/>
<dbReference type="Ensembl" id="ENST00000216802.10">
    <property type="protein sequence ID" value="ENSP00000216802.5"/>
    <property type="gene ID" value="ENSG00000100911.16"/>
</dbReference>
<dbReference type="Ensembl" id="ENST00000645325.2">
    <property type="protein sequence ID" value="ENSP00000495790.1"/>
    <property type="gene ID" value="ENSG00000284889.2"/>
</dbReference>
<dbReference type="GeneID" id="5721"/>
<dbReference type="KEGG" id="hsa:5721"/>
<dbReference type="MANE-Select" id="ENST00000216802.10">
    <property type="protein sequence ID" value="ENSP00000216802.5"/>
    <property type="RefSeq nucleotide sequence ID" value="NM_002818.3"/>
    <property type="RefSeq protein sequence ID" value="NP_002809.2"/>
</dbReference>
<dbReference type="UCSC" id="uc001wmj.4">
    <property type="organism name" value="human"/>
</dbReference>
<dbReference type="AGR" id="HGNC:9569"/>
<dbReference type="CTD" id="5721"/>
<dbReference type="DisGeNET" id="5721"/>
<dbReference type="GeneCards" id="PSME2"/>
<dbReference type="HGNC" id="HGNC:9569">
    <property type="gene designation" value="PSME2"/>
</dbReference>
<dbReference type="HPA" id="ENSG00000100911">
    <property type="expression patterns" value="Low tissue specificity"/>
</dbReference>
<dbReference type="MIM" id="602161">
    <property type="type" value="gene"/>
</dbReference>
<dbReference type="neXtProt" id="NX_Q9UL46"/>
<dbReference type="OpenTargets" id="ENSG00000100911"/>
<dbReference type="PharmGKB" id="PA33915"/>
<dbReference type="VEuPathDB" id="HostDB:ENSG00000100911"/>
<dbReference type="eggNOG" id="KOG4470">
    <property type="taxonomic scope" value="Eukaryota"/>
</dbReference>
<dbReference type="GeneTree" id="ENSGT00950000183098"/>
<dbReference type="InParanoid" id="Q9UL46"/>
<dbReference type="OMA" id="KKPPKCG"/>
<dbReference type="OrthoDB" id="6591885at2759"/>
<dbReference type="PAN-GO" id="Q9UL46">
    <property type="GO annotations" value="6 GO annotations based on evolutionary models"/>
</dbReference>
<dbReference type="PhylomeDB" id="Q9UL46"/>
<dbReference type="TreeFam" id="TF106236"/>
<dbReference type="PathwayCommons" id="Q9UL46"/>
<dbReference type="Reactome" id="R-HSA-8950505">
    <property type="pathway name" value="Gene and protein expression by JAK-STAT signaling after Interleukin-12 stimulation"/>
</dbReference>
<dbReference type="Reactome" id="R-HSA-9907900">
    <property type="pathway name" value="Proteasome assembly"/>
</dbReference>
<dbReference type="SignaLink" id="Q9UL46"/>
<dbReference type="SIGNOR" id="Q9UL46"/>
<dbReference type="BioGRID-ORCS" id="5721">
    <property type="hits" value="33 hits in 1158 CRISPR screens"/>
</dbReference>
<dbReference type="CD-CODE" id="8C2F96ED">
    <property type="entry name" value="Centrosome"/>
</dbReference>
<dbReference type="ChiTaRS" id="PSME2">
    <property type="organism name" value="human"/>
</dbReference>
<dbReference type="GeneWiki" id="PSME2"/>
<dbReference type="GenomeRNAi" id="5721"/>
<dbReference type="Pharos" id="Q9UL46">
    <property type="development level" value="Tbio"/>
</dbReference>
<dbReference type="PRO" id="PR:Q9UL46"/>
<dbReference type="Proteomes" id="UP000005640">
    <property type="component" value="Chromosome 14"/>
</dbReference>
<dbReference type="RNAct" id="Q9UL46">
    <property type="molecule type" value="protein"/>
</dbReference>
<dbReference type="Bgee" id="ENSG00000100911">
    <property type="expression patterns" value="Expressed in granulocyte and 97 other cell types or tissues"/>
</dbReference>
<dbReference type="ExpressionAtlas" id="Q9UL46">
    <property type="expression patterns" value="baseline and differential"/>
</dbReference>
<dbReference type="GO" id="GO:0005737">
    <property type="term" value="C:cytoplasm"/>
    <property type="evidence" value="ECO:0000318"/>
    <property type="project" value="GO_Central"/>
</dbReference>
<dbReference type="GO" id="GO:0005829">
    <property type="term" value="C:cytosol"/>
    <property type="evidence" value="ECO:0000304"/>
    <property type="project" value="Reactome"/>
</dbReference>
<dbReference type="GO" id="GO:0070062">
    <property type="term" value="C:extracellular exosome"/>
    <property type="evidence" value="ECO:0007005"/>
    <property type="project" value="UniProtKB"/>
</dbReference>
<dbReference type="GO" id="GO:0016020">
    <property type="term" value="C:membrane"/>
    <property type="evidence" value="ECO:0007005"/>
    <property type="project" value="UniProtKB"/>
</dbReference>
<dbReference type="GO" id="GO:0005654">
    <property type="term" value="C:nucleoplasm"/>
    <property type="evidence" value="ECO:0000318"/>
    <property type="project" value="GO_Central"/>
</dbReference>
<dbReference type="GO" id="GO:0008537">
    <property type="term" value="C:proteasome activator complex"/>
    <property type="evidence" value="ECO:0007669"/>
    <property type="project" value="InterPro"/>
</dbReference>
<dbReference type="GO" id="GO:0000502">
    <property type="term" value="C:proteasome complex"/>
    <property type="evidence" value="ECO:0000304"/>
    <property type="project" value="ProtInc"/>
</dbReference>
<dbReference type="GO" id="GO:0061133">
    <property type="term" value="F:endopeptidase activator activity"/>
    <property type="evidence" value="ECO:0000318"/>
    <property type="project" value="GO_Central"/>
</dbReference>
<dbReference type="GO" id="GO:0042802">
    <property type="term" value="F:identical protein binding"/>
    <property type="evidence" value="ECO:0000353"/>
    <property type="project" value="IntAct"/>
</dbReference>
<dbReference type="GO" id="GO:2000045">
    <property type="term" value="P:regulation of G1/S transition of mitotic cell cycle"/>
    <property type="evidence" value="ECO:0000318"/>
    <property type="project" value="GO_Central"/>
</dbReference>
<dbReference type="GO" id="GO:0061136">
    <property type="term" value="P:regulation of proteasomal protein catabolic process"/>
    <property type="evidence" value="ECO:0000318"/>
    <property type="project" value="GO_Central"/>
</dbReference>
<dbReference type="FunFam" id="1.20.120.180:FF:000002">
    <property type="entry name" value="Proteasome activator complex subunit 1"/>
    <property type="match status" value="1"/>
</dbReference>
<dbReference type="FunFam" id="1.20.5.120:FF:000002">
    <property type="entry name" value="proteasome activator complex subunit 2"/>
    <property type="match status" value="1"/>
</dbReference>
<dbReference type="Gene3D" id="1.20.120.180">
    <property type="entry name" value="Proteasome activator pa28, C-terminal domain"/>
    <property type="match status" value="1"/>
</dbReference>
<dbReference type="Gene3D" id="1.20.5.120">
    <property type="entry name" value="Proteasome activator pa28, N-terminal domain"/>
    <property type="match status" value="1"/>
</dbReference>
<dbReference type="InterPro" id="IPR003186">
    <property type="entry name" value="PA28_C"/>
</dbReference>
<dbReference type="InterPro" id="IPR036997">
    <property type="entry name" value="PA28_C_sf"/>
</dbReference>
<dbReference type="InterPro" id="IPR036996">
    <property type="entry name" value="PA28_N_sf"/>
</dbReference>
<dbReference type="InterPro" id="IPR009077">
    <property type="entry name" value="Proteasome_activ_PA28"/>
</dbReference>
<dbReference type="InterPro" id="IPR003185">
    <property type="entry name" value="Proteasome_activ_PA28_N"/>
</dbReference>
<dbReference type="InterPro" id="IPR036252">
    <property type="entry name" value="Proteasome_activ_sf"/>
</dbReference>
<dbReference type="PANTHER" id="PTHR10660:SF6">
    <property type="entry name" value="PROTEASOME ACTIVATOR COMPLEX SUBUNIT 2"/>
    <property type="match status" value="1"/>
</dbReference>
<dbReference type="PANTHER" id="PTHR10660">
    <property type="entry name" value="PROTEASOME REGULATOR PA28"/>
    <property type="match status" value="1"/>
</dbReference>
<dbReference type="Pfam" id="PF02252">
    <property type="entry name" value="PA28_C"/>
    <property type="match status" value="1"/>
</dbReference>
<dbReference type="Pfam" id="PF02251">
    <property type="entry name" value="PA28_N"/>
    <property type="match status" value="1"/>
</dbReference>
<dbReference type="SUPFAM" id="SSF47216">
    <property type="entry name" value="Proteasome activator"/>
    <property type="match status" value="1"/>
</dbReference>
<evidence type="ECO:0000269" key="1">
    <source>
    </source>
</evidence>
<evidence type="ECO:0000269" key="2">
    <source>
    </source>
</evidence>
<evidence type="ECO:0000269" key="3">
    <source>
    </source>
</evidence>
<evidence type="ECO:0000269" key="4">
    <source ref="5"/>
</evidence>
<evidence type="ECO:0000305" key="5"/>
<evidence type="ECO:0007744" key="6">
    <source>
    </source>
</evidence>
<evidence type="ECO:0007744" key="7">
    <source>
    </source>
</evidence>
<evidence type="ECO:0007744" key="8">
    <source>
    </source>
</evidence>
<evidence type="ECO:0007829" key="9">
    <source>
        <dbReference type="PDB" id="7NAO"/>
    </source>
</evidence>
<feature type="initiator methionine" description="Removed" evidence="4 7">
    <location>
        <position position="1"/>
    </location>
</feature>
<feature type="chain" id="PRO_0000161785" description="Proteasome activator complex subunit 2">
    <location>
        <begin position="2"/>
        <end position="239"/>
    </location>
</feature>
<feature type="modified residue" description="N-acetylalanine" evidence="4 7">
    <location>
        <position position="2"/>
    </location>
</feature>
<feature type="modified residue" description="Phosphoserine" evidence="6 8">
    <location>
        <position position="10"/>
    </location>
</feature>
<feature type="sequence variant" id="VAR_063111" description="In dbSNP:rs7146672." evidence="1 2 3">
    <original>H</original>
    <variation>P</variation>
    <location>
        <position position="89"/>
    </location>
</feature>
<feature type="sequence conflict" description="In Ref. 2; BAA08205." evidence="5" ref="2">
    <original>N</original>
    <variation>T</variation>
    <location>
        <position position="229"/>
    </location>
</feature>
<feature type="helix" evidence="9">
    <location>
        <begin position="11"/>
        <end position="33"/>
    </location>
</feature>
<feature type="helix" evidence="9">
    <location>
        <begin position="35"/>
        <end position="48"/>
    </location>
</feature>
<feature type="helix" evidence="9">
    <location>
        <begin position="50"/>
        <end position="52"/>
    </location>
</feature>
<feature type="turn" evidence="9">
    <location>
        <begin position="57"/>
        <end position="60"/>
    </location>
</feature>
<feature type="helix" evidence="9">
    <location>
        <begin position="98"/>
        <end position="128"/>
    </location>
</feature>
<feature type="helix" evidence="9">
    <location>
        <begin position="137"/>
        <end position="180"/>
    </location>
</feature>
<feature type="turn" evidence="9">
    <location>
        <begin position="181"/>
        <end position="183"/>
    </location>
</feature>
<feature type="helix" evidence="9">
    <location>
        <begin position="186"/>
        <end position="222"/>
    </location>
</feature>
<feature type="helix" evidence="9">
    <location>
        <begin position="224"/>
        <end position="228"/>
    </location>
</feature>
<feature type="strand" evidence="9">
    <location>
        <begin position="229"/>
        <end position="231"/>
    </location>
</feature>